<organism>
    <name type="scientific">Dinoroseobacter shibae (strain DSM 16493 / NCIMB 14021 / DFL 12)</name>
    <dbReference type="NCBI Taxonomy" id="398580"/>
    <lineage>
        <taxon>Bacteria</taxon>
        <taxon>Pseudomonadati</taxon>
        <taxon>Pseudomonadota</taxon>
        <taxon>Alphaproteobacteria</taxon>
        <taxon>Rhodobacterales</taxon>
        <taxon>Roseobacteraceae</taxon>
        <taxon>Dinoroseobacter</taxon>
    </lineage>
</organism>
<gene>
    <name evidence="1" type="primary">idi</name>
    <name type="ordered locus">Dshi_3527</name>
</gene>
<comment type="function">
    <text evidence="1">Catalyzes the 1,3-allylic rearrangement of the homoallylic substrate isopentenyl (IPP) to its highly electrophilic allylic isomer, dimethylallyl diphosphate (DMAPP).</text>
</comment>
<comment type="catalytic activity">
    <reaction evidence="1">
        <text>isopentenyl diphosphate = dimethylallyl diphosphate</text>
        <dbReference type="Rhea" id="RHEA:23284"/>
        <dbReference type="ChEBI" id="CHEBI:57623"/>
        <dbReference type="ChEBI" id="CHEBI:128769"/>
        <dbReference type="EC" id="5.3.3.2"/>
    </reaction>
</comment>
<comment type="cofactor">
    <cofactor evidence="1">
        <name>Mg(2+)</name>
        <dbReference type="ChEBI" id="CHEBI:18420"/>
    </cofactor>
    <text evidence="1">Binds 1 Mg(2+) ion per subunit. The magnesium ion binds only when substrate is bound.</text>
</comment>
<comment type="cofactor">
    <cofactor evidence="1">
        <name>Mn(2+)</name>
        <dbReference type="ChEBI" id="CHEBI:29035"/>
    </cofactor>
    <text evidence="1">Binds 1 Mn(2+) ion per subunit.</text>
</comment>
<comment type="pathway">
    <text evidence="1">Isoprenoid biosynthesis; dimethylallyl diphosphate biosynthesis; dimethylallyl diphosphate from isopentenyl diphosphate: step 1/1.</text>
</comment>
<comment type="pathway">
    <text evidence="1">Porphyrin-containing compound metabolism; chlorophyll biosynthesis.</text>
</comment>
<comment type="subcellular location">
    <subcellularLocation>
        <location evidence="1">Cytoplasm</location>
    </subcellularLocation>
</comment>
<comment type="similarity">
    <text evidence="1">Belongs to the IPP isomerase type 1 family.</text>
</comment>
<feature type="chain" id="PRO_1000077741" description="Isopentenyl-diphosphate Delta-isomerase">
    <location>
        <begin position="1"/>
        <end position="176"/>
    </location>
</feature>
<feature type="domain" description="Nudix hydrolase">
    <location>
        <begin position="26"/>
        <end position="160"/>
    </location>
</feature>
<feature type="active site" evidence="1">
    <location>
        <position position="62"/>
    </location>
</feature>
<feature type="active site" evidence="1">
    <location>
        <position position="110"/>
    </location>
</feature>
<feature type="binding site" evidence="1">
    <location>
        <position position="22"/>
    </location>
    <ligand>
        <name>Mn(2+)</name>
        <dbReference type="ChEBI" id="CHEBI:29035"/>
    </ligand>
</feature>
<feature type="binding site" evidence="1">
    <location>
        <position position="28"/>
    </location>
    <ligand>
        <name>Mn(2+)</name>
        <dbReference type="ChEBI" id="CHEBI:29035"/>
    </ligand>
</feature>
<feature type="binding site" evidence="1">
    <location>
        <position position="64"/>
    </location>
    <ligand>
        <name>Mn(2+)</name>
        <dbReference type="ChEBI" id="CHEBI:29035"/>
    </ligand>
</feature>
<feature type="binding site" evidence="1">
    <location>
        <position position="82"/>
    </location>
    <ligand>
        <name>Mg(2+)</name>
        <dbReference type="ChEBI" id="CHEBI:18420"/>
    </ligand>
</feature>
<feature type="binding site" evidence="1">
    <location>
        <position position="108"/>
    </location>
    <ligand>
        <name>Mn(2+)</name>
        <dbReference type="ChEBI" id="CHEBI:29035"/>
    </ligand>
</feature>
<feature type="binding site" evidence="1">
    <location>
        <position position="110"/>
    </location>
    <ligand>
        <name>Mn(2+)</name>
        <dbReference type="ChEBI" id="CHEBI:29035"/>
    </ligand>
</feature>
<keyword id="KW-0149">Chlorophyll biosynthesis</keyword>
<keyword id="KW-0963">Cytoplasm</keyword>
<keyword id="KW-0413">Isomerase</keyword>
<keyword id="KW-0414">Isoprene biosynthesis</keyword>
<keyword id="KW-0460">Magnesium</keyword>
<keyword id="KW-0464">Manganese</keyword>
<keyword id="KW-0479">Metal-binding</keyword>
<keyword id="KW-0602">Photosynthesis</keyword>
<keyword id="KW-1185">Reference proteome</keyword>
<reference key="1">
    <citation type="journal article" date="2010" name="ISME J.">
        <title>The complete genome sequence of the algal symbiont Dinoroseobacter shibae: a hitchhiker's guide to life in the sea.</title>
        <authorList>
            <person name="Wagner-Dobler I."/>
            <person name="Ballhausen B."/>
            <person name="Berger M."/>
            <person name="Brinkhoff T."/>
            <person name="Buchholz I."/>
            <person name="Bunk B."/>
            <person name="Cypionka H."/>
            <person name="Daniel R."/>
            <person name="Drepper T."/>
            <person name="Gerdts G."/>
            <person name="Hahnke S."/>
            <person name="Han C."/>
            <person name="Jahn D."/>
            <person name="Kalhoefer D."/>
            <person name="Kiss H."/>
            <person name="Klenk H.P."/>
            <person name="Kyrpides N."/>
            <person name="Liebl W."/>
            <person name="Liesegang H."/>
            <person name="Meincke L."/>
            <person name="Pati A."/>
            <person name="Petersen J."/>
            <person name="Piekarski T."/>
            <person name="Pommerenke C."/>
            <person name="Pradella S."/>
            <person name="Pukall R."/>
            <person name="Rabus R."/>
            <person name="Stackebrandt E."/>
            <person name="Thole S."/>
            <person name="Thompson L."/>
            <person name="Tielen P."/>
            <person name="Tomasch J."/>
            <person name="von Jan M."/>
            <person name="Wanphrut N."/>
            <person name="Wichels A."/>
            <person name="Zech H."/>
            <person name="Simon M."/>
        </authorList>
    </citation>
    <scope>NUCLEOTIDE SEQUENCE [LARGE SCALE GENOMIC DNA]</scope>
    <source>
        <strain>DSM 16493 / NCIMB 14021 / DFL 12</strain>
    </source>
</reference>
<accession>A8LQ20</accession>
<name>IDI_DINSH</name>
<sequence length="176" mass="20112">MKDLVPAWIDGALRPVGKLEAHQRGLRHKAVSVFVMRGPETLIQRRALDKYHTPGLWANTCCTHPLWDESPADCAVRRLREELGITGLYPAHRDRIEYRADVGNGLIEHEVVDLFIAEAPANLKVAPNPEEVAEVKWVDLYELNAQVKRRPERYTPWLRIYLAEHSERIFGTVATS</sequence>
<protein>
    <recommendedName>
        <fullName evidence="1">Isopentenyl-diphosphate Delta-isomerase</fullName>
        <shortName evidence="1">IPP isomerase</shortName>
        <ecNumber evidence="1">5.3.3.2</ecNumber>
    </recommendedName>
    <alternativeName>
        <fullName evidence="1">IPP:DMAPP isomerase</fullName>
    </alternativeName>
    <alternativeName>
        <fullName evidence="1">Isopentenyl pyrophosphate isomerase</fullName>
    </alternativeName>
</protein>
<dbReference type="EC" id="5.3.3.2" evidence="1"/>
<dbReference type="EMBL" id="CP000830">
    <property type="protein sequence ID" value="ABV95260.1"/>
    <property type="molecule type" value="Genomic_DNA"/>
</dbReference>
<dbReference type="RefSeq" id="WP_012180183.1">
    <property type="nucleotide sequence ID" value="NC_009952.1"/>
</dbReference>
<dbReference type="SMR" id="A8LQ20"/>
<dbReference type="STRING" id="398580.Dshi_3527"/>
<dbReference type="KEGG" id="dsh:Dshi_3527"/>
<dbReference type="eggNOG" id="COG1443">
    <property type="taxonomic scope" value="Bacteria"/>
</dbReference>
<dbReference type="HOGENOM" id="CLU_060552_2_1_5"/>
<dbReference type="OrthoDB" id="9809458at2"/>
<dbReference type="UniPathway" id="UPA00059">
    <property type="reaction ID" value="UER00104"/>
</dbReference>
<dbReference type="UniPathway" id="UPA00668"/>
<dbReference type="Proteomes" id="UP000006833">
    <property type="component" value="Chromosome"/>
</dbReference>
<dbReference type="GO" id="GO:0005737">
    <property type="term" value="C:cytoplasm"/>
    <property type="evidence" value="ECO:0007669"/>
    <property type="project" value="UniProtKB-SubCell"/>
</dbReference>
<dbReference type="GO" id="GO:0004452">
    <property type="term" value="F:isopentenyl-diphosphate delta-isomerase activity"/>
    <property type="evidence" value="ECO:0007669"/>
    <property type="project" value="UniProtKB-UniRule"/>
</dbReference>
<dbReference type="GO" id="GO:0046872">
    <property type="term" value="F:metal ion binding"/>
    <property type="evidence" value="ECO:0007669"/>
    <property type="project" value="UniProtKB-KW"/>
</dbReference>
<dbReference type="GO" id="GO:0015995">
    <property type="term" value="P:chlorophyll biosynthetic process"/>
    <property type="evidence" value="ECO:0007669"/>
    <property type="project" value="UniProtKB-UniRule"/>
</dbReference>
<dbReference type="GO" id="GO:0050992">
    <property type="term" value="P:dimethylallyl diphosphate biosynthetic process"/>
    <property type="evidence" value="ECO:0007669"/>
    <property type="project" value="UniProtKB-UniRule"/>
</dbReference>
<dbReference type="GO" id="GO:0009240">
    <property type="term" value="P:isopentenyl diphosphate biosynthetic process"/>
    <property type="evidence" value="ECO:0007669"/>
    <property type="project" value="TreeGrafter"/>
</dbReference>
<dbReference type="GO" id="GO:0015979">
    <property type="term" value="P:photosynthesis"/>
    <property type="evidence" value="ECO:0007669"/>
    <property type="project" value="UniProtKB-UniRule"/>
</dbReference>
<dbReference type="CDD" id="cd02885">
    <property type="entry name" value="NUDIX_IPP_Isomerase"/>
    <property type="match status" value="1"/>
</dbReference>
<dbReference type="Gene3D" id="3.90.79.10">
    <property type="entry name" value="Nucleoside Triphosphate Pyrophosphohydrolase"/>
    <property type="match status" value="1"/>
</dbReference>
<dbReference type="HAMAP" id="MF_00202">
    <property type="entry name" value="Idi"/>
    <property type="match status" value="1"/>
</dbReference>
<dbReference type="InterPro" id="IPR056375">
    <property type="entry name" value="Idi_bact"/>
</dbReference>
<dbReference type="InterPro" id="IPR011876">
    <property type="entry name" value="IsopentenylPP_isomerase_typ1"/>
</dbReference>
<dbReference type="InterPro" id="IPR015797">
    <property type="entry name" value="NUDIX_hydrolase-like_dom_sf"/>
</dbReference>
<dbReference type="InterPro" id="IPR000086">
    <property type="entry name" value="NUDIX_hydrolase_dom"/>
</dbReference>
<dbReference type="NCBIfam" id="TIGR02150">
    <property type="entry name" value="IPP_isom_1"/>
    <property type="match status" value="1"/>
</dbReference>
<dbReference type="NCBIfam" id="NF002995">
    <property type="entry name" value="PRK03759.1"/>
    <property type="match status" value="1"/>
</dbReference>
<dbReference type="PANTHER" id="PTHR10885">
    <property type="entry name" value="ISOPENTENYL-DIPHOSPHATE DELTA-ISOMERASE"/>
    <property type="match status" value="1"/>
</dbReference>
<dbReference type="PANTHER" id="PTHR10885:SF0">
    <property type="entry name" value="ISOPENTENYL-DIPHOSPHATE DELTA-ISOMERASE"/>
    <property type="match status" value="1"/>
</dbReference>
<dbReference type="Pfam" id="PF00293">
    <property type="entry name" value="NUDIX"/>
    <property type="match status" value="1"/>
</dbReference>
<dbReference type="PIRSF" id="PIRSF018427">
    <property type="entry name" value="Isopntndiph_ism"/>
    <property type="match status" value="1"/>
</dbReference>
<dbReference type="SUPFAM" id="SSF55811">
    <property type="entry name" value="Nudix"/>
    <property type="match status" value="1"/>
</dbReference>
<dbReference type="PROSITE" id="PS51462">
    <property type="entry name" value="NUDIX"/>
    <property type="match status" value="1"/>
</dbReference>
<evidence type="ECO:0000255" key="1">
    <source>
        <dbReference type="HAMAP-Rule" id="MF_00202"/>
    </source>
</evidence>
<proteinExistence type="inferred from homology"/>